<comment type="function">
    <text evidence="1">The UvrABC repair system catalyzes the recognition and processing of DNA lesions. UvrC both incises the 5' and 3' sides of the lesion. The N-terminal half is responsible for the 3' incision and the C-terminal half is responsible for the 5' incision.</text>
</comment>
<comment type="subunit">
    <text evidence="1">Interacts with UvrB in an incision complex.</text>
</comment>
<comment type="subcellular location">
    <subcellularLocation>
        <location evidence="1">Cytoplasm</location>
    </subcellularLocation>
</comment>
<comment type="similarity">
    <text evidence="1">Belongs to the UvrC family.</text>
</comment>
<protein>
    <recommendedName>
        <fullName evidence="1">UvrABC system protein C</fullName>
        <shortName evidence="1">Protein UvrC</shortName>
    </recommendedName>
    <alternativeName>
        <fullName evidence="1">Excinuclease ABC subunit C</fullName>
    </alternativeName>
</protein>
<reference key="1">
    <citation type="submission" date="2006-06" db="EMBL/GenBank/DDBJ databases">
        <title>Complete sequence of chromosome of Mesorhizobium sp. BNC1.</title>
        <authorList>
            <consortium name="US DOE Joint Genome Institute"/>
            <person name="Copeland A."/>
            <person name="Lucas S."/>
            <person name="Lapidus A."/>
            <person name="Barry K."/>
            <person name="Detter J.C."/>
            <person name="Glavina del Rio T."/>
            <person name="Hammon N."/>
            <person name="Israni S."/>
            <person name="Dalin E."/>
            <person name="Tice H."/>
            <person name="Pitluck S."/>
            <person name="Chertkov O."/>
            <person name="Brettin T."/>
            <person name="Bruce D."/>
            <person name="Han C."/>
            <person name="Tapia R."/>
            <person name="Gilna P."/>
            <person name="Schmutz J."/>
            <person name="Larimer F."/>
            <person name="Land M."/>
            <person name="Hauser L."/>
            <person name="Kyrpides N."/>
            <person name="Mikhailova N."/>
            <person name="Richardson P."/>
        </authorList>
    </citation>
    <scope>NUCLEOTIDE SEQUENCE [LARGE SCALE GENOMIC DNA]</scope>
    <source>
        <strain>BNC1</strain>
    </source>
</reference>
<evidence type="ECO:0000255" key="1">
    <source>
        <dbReference type="HAMAP-Rule" id="MF_00203"/>
    </source>
</evidence>
<dbReference type="EMBL" id="CP000390">
    <property type="protein sequence ID" value="ABG63368.1"/>
    <property type="molecule type" value="Genomic_DNA"/>
</dbReference>
<dbReference type="SMR" id="Q11GV7"/>
<dbReference type="STRING" id="266779.Meso_1975"/>
<dbReference type="KEGG" id="mes:Meso_1975"/>
<dbReference type="eggNOG" id="COG0322">
    <property type="taxonomic scope" value="Bacteria"/>
</dbReference>
<dbReference type="HOGENOM" id="CLU_014841_3_0_5"/>
<dbReference type="OrthoDB" id="9804933at2"/>
<dbReference type="GO" id="GO:0005737">
    <property type="term" value="C:cytoplasm"/>
    <property type="evidence" value="ECO:0007669"/>
    <property type="project" value="UniProtKB-SubCell"/>
</dbReference>
<dbReference type="GO" id="GO:0009380">
    <property type="term" value="C:excinuclease repair complex"/>
    <property type="evidence" value="ECO:0007669"/>
    <property type="project" value="InterPro"/>
</dbReference>
<dbReference type="GO" id="GO:0003677">
    <property type="term" value="F:DNA binding"/>
    <property type="evidence" value="ECO:0007669"/>
    <property type="project" value="UniProtKB-UniRule"/>
</dbReference>
<dbReference type="GO" id="GO:0009381">
    <property type="term" value="F:excinuclease ABC activity"/>
    <property type="evidence" value="ECO:0007669"/>
    <property type="project" value="UniProtKB-UniRule"/>
</dbReference>
<dbReference type="GO" id="GO:0006289">
    <property type="term" value="P:nucleotide-excision repair"/>
    <property type="evidence" value="ECO:0007669"/>
    <property type="project" value="UniProtKB-UniRule"/>
</dbReference>
<dbReference type="GO" id="GO:0009432">
    <property type="term" value="P:SOS response"/>
    <property type="evidence" value="ECO:0007669"/>
    <property type="project" value="UniProtKB-UniRule"/>
</dbReference>
<dbReference type="CDD" id="cd10434">
    <property type="entry name" value="GIY-YIG_UvrC_Cho"/>
    <property type="match status" value="1"/>
</dbReference>
<dbReference type="FunFam" id="3.30.420.340:FF:000001">
    <property type="entry name" value="UvrABC system protein C"/>
    <property type="match status" value="1"/>
</dbReference>
<dbReference type="FunFam" id="3.40.1440.10:FF:000001">
    <property type="entry name" value="UvrABC system protein C"/>
    <property type="match status" value="1"/>
</dbReference>
<dbReference type="Gene3D" id="1.10.150.20">
    <property type="entry name" value="5' to 3' exonuclease, C-terminal subdomain"/>
    <property type="match status" value="1"/>
</dbReference>
<dbReference type="Gene3D" id="3.40.1440.10">
    <property type="entry name" value="GIY-YIG endonuclease"/>
    <property type="match status" value="1"/>
</dbReference>
<dbReference type="Gene3D" id="4.10.860.10">
    <property type="entry name" value="UVR domain"/>
    <property type="match status" value="1"/>
</dbReference>
<dbReference type="Gene3D" id="3.30.420.340">
    <property type="entry name" value="UvrC, RNAse H endonuclease domain"/>
    <property type="match status" value="1"/>
</dbReference>
<dbReference type="HAMAP" id="MF_00203">
    <property type="entry name" value="UvrC"/>
    <property type="match status" value="1"/>
</dbReference>
<dbReference type="InterPro" id="IPR000305">
    <property type="entry name" value="GIY-YIG_endonuc"/>
</dbReference>
<dbReference type="InterPro" id="IPR035901">
    <property type="entry name" value="GIY-YIG_endonuc_sf"/>
</dbReference>
<dbReference type="InterPro" id="IPR047296">
    <property type="entry name" value="GIY-YIG_UvrC_Cho"/>
</dbReference>
<dbReference type="InterPro" id="IPR003583">
    <property type="entry name" value="Hlx-hairpin-Hlx_DNA-bd_motif"/>
</dbReference>
<dbReference type="InterPro" id="IPR010994">
    <property type="entry name" value="RuvA_2-like"/>
</dbReference>
<dbReference type="InterPro" id="IPR001943">
    <property type="entry name" value="UVR_dom"/>
</dbReference>
<dbReference type="InterPro" id="IPR036876">
    <property type="entry name" value="UVR_dom_sf"/>
</dbReference>
<dbReference type="InterPro" id="IPR050066">
    <property type="entry name" value="UvrABC_protein_C"/>
</dbReference>
<dbReference type="InterPro" id="IPR004791">
    <property type="entry name" value="UvrC"/>
</dbReference>
<dbReference type="InterPro" id="IPR001162">
    <property type="entry name" value="UvrC_RNase_H_dom"/>
</dbReference>
<dbReference type="InterPro" id="IPR038476">
    <property type="entry name" value="UvrC_RNase_H_dom_sf"/>
</dbReference>
<dbReference type="NCBIfam" id="NF001824">
    <property type="entry name" value="PRK00558.1-5"/>
    <property type="match status" value="1"/>
</dbReference>
<dbReference type="NCBIfam" id="TIGR00194">
    <property type="entry name" value="uvrC"/>
    <property type="match status" value="1"/>
</dbReference>
<dbReference type="PANTHER" id="PTHR30562:SF1">
    <property type="entry name" value="UVRABC SYSTEM PROTEIN C"/>
    <property type="match status" value="1"/>
</dbReference>
<dbReference type="PANTHER" id="PTHR30562">
    <property type="entry name" value="UVRC/OXIDOREDUCTASE"/>
    <property type="match status" value="1"/>
</dbReference>
<dbReference type="Pfam" id="PF01541">
    <property type="entry name" value="GIY-YIG"/>
    <property type="match status" value="1"/>
</dbReference>
<dbReference type="Pfam" id="PF14520">
    <property type="entry name" value="HHH_5"/>
    <property type="match status" value="1"/>
</dbReference>
<dbReference type="Pfam" id="PF02151">
    <property type="entry name" value="UVR"/>
    <property type="match status" value="1"/>
</dbReference>
<dbReference type="Pfam" id="PF22920">
    <property type="entry name" value="UvrC_RNaseH"/>
    <property type="match status" value="1"/>
</dbReference>
<dbReference type="Pfam" id="PF08459">
    <property type="entry name" value="UvrC_RNaseH_dom"/>
    <property type="match status" value="1"/>
</dbReference>
<dbReference type="SMART" id="SM00465">
    <property type="entry name" value="GIYc"/>
    <property type="match status" value="1"/>
</dbReference>
<dbReference type="SMART" id="SM00278">
    <property type="entry name" value="HhH1"/>
    <property type="match status" value="2"/>
</dbReference>
<dbReference type="SUPFAM" id="SSF46600">
    <property type="entry name" value="C-terminal UvrC-binding domain of UvrB"/>
    <property type="match status" value="1"/>
</dbReference>
<dbReference type="SUPFAM" id="SSF82771">
    <property type="entry name" value="GIY-YIG endonuclease"/>
    <property type="match status" value="1"/>
</dbReference>
<dbReference type="SUPFAM" id="SSF47781">
    <property type="entry name" value="RuvA domain 2-like"/>
    <property type="match status" value="1"/>
</dbReference>
<dbReference type="PROSITE" id="PS50164">
    <property type="entry name" value="GIY_YIG"/>
    <property type="match status" value="1"/>
</dbReference>
<dbReference type="PROSITE" id="PS50151">
    <property type="entry name" value="UVR"/>
    <property type="match status" value="1"/>
</dbReference>
<dbReference type="PROSITE" id="PS50165">
    <property type="entry name" value="UVRC"/>
    <property type="match status" value="1"/>
</dbReference>
<organism>
    <name type="scientific">Chelativorans sp. (strain BNC1)</name>
    <dbReference type="NCBI Taxonomy" id="266779"/>
    <lineage>
        <taxon>Bacteria</taxon>
        <taxon>Pseudomonadati</taxon>
        <taxon>Pseudomonadota</taxon>
        <taxon>Alphaproteobacteria</taxon>
        <taxon>Hyphomicrobiales</taxon>
        <taxon>Phyllobacteriaceae</taxon>
        <taxon>Chelativorans</taxon>
    </lineage>
</organism>
<feature type="chain" id="PRO_0000264910" description="UvrABC system protein C">
    <location>
        <begin position="1"/>
        <end position="653"/>
    </location>
</feature>
<feature type="domain" description="GIY-YIG" evidence="1">
    <location>
        <begin position="44"/>
        <end position="122"/>
    </location>
</feature>
<feature type="domain" description="UVR" evidence="1">
    <location>
        <begin position="232"/>
        <end position="267"/>
    </location>
</feature>
<gene>
    <name evidence="1" type="primary">uvrC</name>
    <name type="ordered locus">Meso_1975</name>
</gene>
<name>UVRC_CHESB</name>
<sequence>MNAADLGNTIISAEDSTLEWDRAGTETAATGVEVIQAVVKRLPNAPGVYRMVNTEGDVLYVGKARSLKKRVTNYAQGRGHSNRIERMIRETATMEFVVTRTETEALLLEANLIKRLRPRFNVLMRDDKSFPYILLTGNHPAPGIFKHRGARSRRGDYFGPFASAGAVGRTINSLQRAFLLRTCTDSVFESRTRPCLLYQIKRCSGPCTREISVEDYATLVKEAKDFLSGRSSTVKAEIATAMQEASQALDFERAAIYRDRLAALSHVQSHQGINPQGLEEADVFAIHQEGGQTCIQVFFFRTGQNWGNRAYFPKADPALGHGEVLGSFLAQFYDDKPCPRLILLSHPVEDQDLLAEALSARAGRKVQVSVPARGEKKDLTDHALQNAREALGRRLAETSSQARLLEGLAETFGLEAAPRRIEVYDNSHIMGTNAVGAMIVAGPEGFVKNQYRKFNIRSAEITPGDDFGMMREVMQRRFARLIKEQGLPGNGSEAEDSDASFPAWPDLILIDGGQGQMSAVRQILDDLGIADLVTAIGVAKGVDRDAGRERFFMEGRPPFTLPPRDPVLYFVQRLRDEAHRFAIGSHRARRKKEMVKNPLDEIAGIGPGRKRALLHHFGTAKAVSRAAVEDLMEVGGISESIARLIYNHFHESG</sequence>
<keyword id="KW-0963">Cytoplasm</keyword>
<keyword id="KW-0227">DNA damage</keyword>
<keyword id="KW-0228">DNA excision</keyword>
<keyword id="KW-0234">DNA repair</keyword>
<keyword id="KW-0267">Excision nuclease</keyword>
<keyword id="KW-0742">SOS response</keyword>
<proteinExistence type="inferred from homology"/>
<accession>Q11GV7</accession>